<organism>
    <name type="scientific">Danio rerio</name>
    <name type="common">Zebrafish</name>
    <name type="synonym">Brachydanio rerio</name>
    <dbReference type="NCBI Taxonomy" id="7955"/>
    <lineage>
        <taxon>Eukaryota</taxon>
        <taxon>Metazoa</taxon>
        <taxon>Chordata</taxon>
        <taxon>Craniata</taxon>
        <taxon>Vertebrata</taxon>
        <taxon>Euteleostomi</taxon>
        <taxon>Actinopterygii</taxon>
        <taxon>Neopterygii</taxon>
        <taxon>Teleostei</taxon>
        <taxon>Ostariophysi</taxon>
        <taxon>Cypriniformes</taxon>
        <taxon>Danionidae</taxon>
        <taxon>Danioninae</taxon>
        <taxon>Danio</taxon>
    </lineage>
</organism>
<dbReference type="EMBL" id="AY391419">
    <property type="protein sequence ID" value="AAQ91231.1"/>
    <property type="status" value="ALT_FRAME"/>
    <property type="molecule type" value="mRNA"/>
</dbReference>
<dbReference type="EMBL" id="BX004884">
    <property type="protein sequence ID" value="CAK11143.1"/>
    <property type="molecule type" value="Genomic_DNA"/>
</dbReference>
<dbReference type="EMBL" id="BC054935">
    <property type="protein sequence ID" value="AAH54935.1"/>
    <property type="molecule type" value="mRNA"/>
</dbReference>
<dbReference type="RefSeq" id="NP_957334.1">
    <property type="nucleotide sequence ID" value="NM_201040.1"/>
</dbReference>
<dbReference type="SMR" id="Q7SYB5"/>
<dbReference type="FunCoup" id="Q7SYB5">
    <property type="interactions" value="992"/>
</dbReference>
<dbReference type="STRING" id="7955.ENSDARP00000025016"/>
<dbReference type="PaxDb" id="7955-ENSDARP00000025016"/>
<dbReference type="Ensembl" id="ENSDART00000005359">
    <property type="protein sequence ID" value="ENSDARP00000025016"/>
    <property type="gene ID" value="ENSDARG00000012247"/>
</dbReference>
<dbReference type="GeneID" id="394015"/>
<dbReference type="KEGG" id="dre:394015"/>
<dbReference type="AGR" id="ZFIN:ZDB-GENE-040426-1246"/>
<dbReference type="CTD" id="394015"/>
<dbReference type="ZFIN" id="ZDB-GENE-040426-1246">
    <property type="gene designation" value="def6a"/>
</dbReference>
<dbReference type="eggNOG" id="ENOG502QUWV">
    <property type="taxonomic scope" value="Eukaryota"/>
</dbReference>
<dbReference type="HOGENOM" id="CLU_029358_1_0_1"/>
<dbReference type="InParanoid" id="Q7SYB5"/>
<dbReference type="OMA" id="FEHYRYY"/>
<dbReference type="OrthoDB" id="8434295at2759"/>
<dbReference type="PhylomeDB" id="Q7SYB5"/>
<dbReference type="TreeFam" id="TF333160"/>
<dbReference type="Reactome" id="R-DRE-8980692">
    <property type="pathway name" value="RHOA GTPase cycle"/>
</dbReference>
<dbReference type="Reactome" id="R-DRE-9013148">
    <property type="pathway name" value="CDC42 GTPase cycle"/>
</dbReference>
<dbReference type="Reactome" id="R-DRE-9013149">
    <property type="pathway name" value="RAC1 GTPase cycle"/>
</dbReference>
<dbReference type="Reactome" id="R-DRE-9013404">
    <property type="pathway name" value="RAC2 GTPase cycle"/>
</dbReference>
<dbReference type="PRO" id="PR:Q7SYB5"/>
<dbReference type="Proteomes" id="UP000000437">
    <property type="component" value="Chromosome 8"/>
</dbReference>
<dbReference type="Bgee" id="ENSDARG00000012247">
    <property type="expression patterns" value="Expressed in granulocyte and 25 other cell types or tissues"/>
</dbReference>
<dbReference type="GO" id="GO:0005737">
    <property type="term" value="C:cytoplasm"/>
    <property type="evidence" value="ECO:0000318"/>
    <property type="project" value="GO_Central"/>
</dbReference>
<dbReference type="GO" id="GO:0005634">
    <property type="term" value="C:nucleus"/>
    <property type="evidence" value="ECO:0000318"/>
    <property type="project" value="GO_Central"/>
</dbReference>
<dbReference type="GO" id="GO:0042074">
    <property type="term" value="P:cell migration involved in gastrulation"/>
    <property type="evidence" value="ECO:0000315"/>
    <property type="project" value="ZFIN"/>
</dbReference>
<dbReference type="GO" id="GO:0060026">
    <property type="term" value="P:convergent extension"/>
    <property type="evidence" value="ECO:0000315"/>
    <property type="project" value="ZFIN"/>
</dbReference>
<dbReference type="GO" id="GO:0060027">
    <property type="term" value="P:convergent extension involved in gastrulation"/>
    <property type="evidence" value="ECO:0000315"/>
    <property type="project" value="ZFIN"/>
</dbReference>
<dbReference type="CDD" id="cd13273">
    <property type="entry name" value="PH_SWAP-70"/>
    <property type="match status" value="1"/>
</dbReference>
<dbReference type="FunFam" id="2.30.29.30:FF:000172">
    <property type="entry name" value="differentially expressed in FDCP 6 homolog"/>
    <property type="match status" value="1"/>
</dbReference>
<dbReference type="Gene3D" id="2.30.29.30">
    <property type="entry name" value="Pleckstrin-homology domain (PH domain)/Phosphotyrosine-binding domain (PTB)"/>
    <property type="match status" value="1"/>
</dbReference>
<dbReference type="InterPro" id="IPR011992">
    <property type="entry name" value="EF-hand-dom_pair"/>
</dbReference>
<dbReference type="InterPro" id="IPR011993">
    <property type="entry name" value="PH-like_dom_sf"/>
</dbReference>
<dbReference type="InterPro" id="IPR001849">
    <property type="entry name" value="PH_domain"/>
</dbReference>
<dbReference type="PANTHER" id="PTHR14383:SF2">
    <property type="entry name" value="DIFFERENTIALLY EXPRESSED IN FDCP 6 HOMOLOG"/>
    <property type="match status" value="1"/>
</dbReference>
<dbReference type="PANTHER" id="PTHR14383">
    <property type="entry name" value="SWAP-70 RECOMBINASE"/>
    <property type="match status" value="1"/>
</dbReference>
<dbReference type="Pfam" id="PF00169">
    <property type="entry name" value="PH"/>
    <property type="match status" value="1"/>
</dbReference>
<dbReference type="SMART" id="SM00233">
    <property type="entry name" value="PH"/>
    <property type="match status" value="1"/>
</dbReference>
<dbReference type="SUPFAM" id="SSF47473">
    <property type="entry name" value="EF-hand"/>
    <property type="match status" value="1"/>
</dbReference>
<dbReference type="SUPFAM" id="SSF50729">
    <property type="entry name" value="PH domain-like"/>
    <property type="match status" value="1"/>
</dbReference>
<dbReference type="PROSITE" id="PS50003">
    <property type="entry name" value="PH_DOMAIN"/>
    <property type="match status" value="1"/>
</dbReference>
<feature type="chain" id="PRO_0000294524" description="Differentially expressed in FDCP 6 homolog">
    <location>
        <begin position="1"/>
        <end position="612"/>
    </location>
</feature>
<feature type="domain" description="PH" evidence="1">
    <location>
        <begin position="211"/>
        <end position="307"/>
    </location>
</feature>
<feature type="region of interest" description="Disordered" evidence="2">
    <location>
        <begin position="546"/>
        <end position="612"/>
    </location>
</feature>
<feature type="compositionally biased region" description="Basic and acidic residues" evidence="2">
    <location>
        <begin position="572"/>
        <end position="581"/>
    </location>
</feature>
<feature type="compositionally biased region" description="Basic and acidic residues" evidence="2">
    <location>
        <begin position="588"/>
        <end position="603"/>
    </location>
</feature>
<feature type="sequence conflict" description="In Ref. 1; AAQ91231." evidence="3" ref="1">
    <original>E</original>
    <variation>R</variation>
    <location>
        <position position="215"/>
    </location>
</feature>
<name>DEFI6_DANRE</name>
<accession>Q7SYB5</accession>
<accession>Q6TNU8</accession>
<reference key="1">
    <citation type="journal article" date="2004" name="Proc. Natl. Acad. Sci. U.S.A.">
        <title>Hematopoietic gene expression profile in zebrafish kidney marrow.</title>
        <authorList>
            <person name="Song H.-D."/>
            <person name="Sun X.-J."/>
            <person name="Deng M."/>
            <person name="Zhang G.-W."/>
            <person name="Zhou Y."/>
            <person name="Wu X.-Y."/>
            <person name="Sheng Y."/>
            <person name="Chen Y."/>
            <person name="Ruan Z."/>
            <person name="Jiang C.-L."/>
            <person name="Fan H.-Y."/>
            <person name="Zon L.I."/>
            <person name="Kanki J.P."/>
            <person name="Liu T.X."/>
            <person name="Look A.T."/>
            <person name="Chen Z."/>
        </authorList>
    </citation>
    <scope>NUCLEOTIDE SEQUENCE [LARGE SCALE MRNA]</scope>
    <source>
        <tissue>Kidney marrow</tissue>
    </source>
</reference>
<reference key="2">
    <citation type="journal article" date="2013" name="Nature">
        <title>The zebrafish reference genome sequence and its relationship to the human genome.</title>
        <authorList>
            <person name="Howe K."/>
            <person name="Clark M.D."/>
            <person name="Torroja C.F."/>
            <person name="Torrance J."/>
            <person name="Berthelot C."/>
            <person name="Muffato M."/>
            <person name="Collins J.E."/>
            <person name="Humphray S."/>
            <person name="McLaren K."/>
            <person name="Matthews L."/>
            <person name="McLaren S."/>
            <person name="Sealy I."/>
            <person name="Caccamo M."/>
            <person name="Churcher C."/>
            <person name="Scott C."/>
            <person name="Barrett J.C."/>
            <person name="Koch R."/>
            <person name="Rauch G.J."/>
            <person name="White S."/>
            <person name="Chow W."/>
            <person name="Kilian B."/>
            <person name="Quintais L.T."/>
            <person name="Guerra-Assuncao J.A."/>
            <person name="Zhou Y."/>
            <person name="Gu Y."/>
            <person name="Yen J."/>
            <person name="Vogel J.H."/>
            <person name="Eyre T."/>
            <person name="Redmond S."/>
            <person name="Banerjee R."/>
            <person name="Chi J."/>
            <person name="Fu B."/>
            <person name="Langley E."/>
            <person name="Maguire S.F."/>
            <person name="Laird G.K."/>
            <person name="Lloyd D."/>
            <person name="Kenyon E."/>
            <person name="Donaldson S."/>
            <person name="Sehra H."/>
            <person name="Almeida-King J."/>
            <person name="Loveland J."/>
            <person name="Trevanion S."/>
            <person name="Jones M."/>
            <person name="Quail M."/>
            <person name="Willey D."/>
            <person name="Hunt A."/>
            <person name="Burton J."/>
            <person name="Sims S."/>
            <person name="McLay K."/>
            <person name="Plumb B."/>
            <person name="Davis J."/>
            <person name="Clee C."/>
            <person name="Oliver K."/>
            <person name="Clark R."/>
            <person name="Riddle C."/>
            <person name="Elliot D."/>
            <person name="Threadgold G."/>
            <person name="Harden G."/>
            <person name="Ware D."/>
            <person name="Begum S."/>
            <person name="Mortimore B."/>
            <person name="Kerry G."/>
            <person name="Heath P."/>
            <person name="Phillimore B."/>
            <person name="Tracey A."/>
            <person name="Corby N."/>
            <person name="Dunn M."/>
            <person name="Johnson C."/>
            <person name="Wood J."/>
            <person name="Clark S."/>
            <person name="Pelan S."/>
            <person name="Griffiths G."/>
            <person name="Smith M."/>
            <person name="Glithero R."/>
            <person name="Howden P."/>
            <person name="Barker N."/>
            <person name="Lloyd C."/>
            <person name="Stevens C."/>
            <person name="Harley J."/>
            <person name="Holt K."/>
            <person name="Panagiotidis G."/>
            <person name="Lovell J."/>
            <person name="Beasley H."/>
            <person name="Henderson C."/>
            <person name="Gordon D."/>
            <person name="Auger K."/>
            <person name="Wright D."/>
            <person name="Collins J."/>
            <person name="Raisen C."/>
            <person name="Dyer L."/>
            <person name="Leung K."/>
            <person name="Robertson L."/>
            <person name="Ambridge K."/>
            <person name="Leongamornlert D."/>
            <person name="McGuire S."/>
            <person name="Gilderthorp R."/>
            <person name="Griffiths C."/>
            <person name="Manthravadi D."/>
            <person name="Nichol S."/>
            <person name="Barker G."/>
            <person name="Whitehead S."/>
            <person name="Kay M."/>
            <person name="Brown J."/>
            <person name="Murnane C."/>
            <person name="Gray E."/>
            <person name="Humphries M."/>
            <person name="Sycamore N."/>
            <person name="Barker D."/>
            <person name="Saunders D."/>
            <person name="Wallis J."/>
            <person name="Babbage A."/>
            <person name="Hammond S."/>
            <person name="Mashreghi-Mohammadi M."/>
            <person name="Barr L."/>
            <person name="Martin S."/>
            <person name="Wray P."/>
            <person name="Ellington A."/>
            <person name="Matthews N."/>
            <person name="Ellwood M."/>
            <person name="Woodmansey R."/>
            <person name="Clark G."/>
            <person name="Cooper J."/>
            <person name="Tromans A."/>
            <person name="Grafham D."/>
            <person name="Skuce C."/>
            <person name="Pandian R."/>
            <person name="Andrews R."/>
            <person name="Harrison E."/>
            <person name="Kimberley A."/>
            <person name="Garnett J."/>
            <person name="Fosker N."/>
            <person name="Hall R."/>
            <person name="Garner P."/>
            <person name="Kelly D."/>
            <person name="Bird C."/>
            <person name="Palmer S."/>
            <person name="Gehring I."/>
            <person name="Berger A."/>
            <person name="Dooley C.M."/>
            <person name="Ersan-Urun Z."/>
            <person name="Eser C."/>
            <person name="Geiger H."/>
            <person name="Geisler M."/>
            <person name="Karotki L."/>
            <person name="Kirn A."/>
            <person name="Konantz J."/>
            <person name="Konantz M."/>
            <person name="Oberlander M."/>
            <person name="Rudolph-Geiger S."/>
            <person name="Teucke M."/>
            <person name="Lanz C."/>
            <person name="Raddatz G."/>
            <person name="Osoegawa K."/>
            <person name="Zhu B."/>
            <person name="Rapp A."/>
            <person name="Widaa S."/>
            <person name="Langford C."/>
            <person name="Yang F."/>
            <person name="Schuster S.C."/>
            <person name="Carter N.P."/>
            <person name="Harrow J."/>
            <person name="Ning Z."/>
            <person name="Herrero J."/>
            <person name="Searle S.M."/>
            <person name="Enright A."/>
            <person name="Geisler R."/>
            <person name="Plasterk R.H."/>
            <person name="Lee C."/>
            <person name="Westerfield M."/>
            <person name="de Jong P.J."/>
            <person name="Zon L.I."/>
            <person name="Postlethwait J.H."/>
            <person name="Nusslein-Volhard C."/>
            <person name="Hubbard T.J."/>
            <person name="Roest Crollius H."/>
            <person name="Rogers J."/>
            <person name="Stemple D.L."/>
        </authorList>
    </citation>
    <scope>NUCLEOTIDE SEQUENCE [LARGE SCALE GENOMIC DNA]</scope>
    <source>
        <strain>Tuebingen</strain>
    </source>
</reference>
<reference key="3">
    <citation type="submission" date="2003-07" db="EMBL/GenBank/DDBJ databases">
        <authorList>
            <consortium name="NIH - Zebrafish Gene Collection (ZGC) project"/>
        </authorList>
    </citation>
    <scope>NUCLEOTIDE SEQUENCE [LARGE SCALE MRNA]</scope>
    <source>
        <strain>AB</strain>
    </source>
</reference>
<keyword id="KW-1185">Reference proteome</keyword>
<proteinExistence type="evidence at transcript level"/>
<gene>
    <name type="primary">def6</name>
    <name type="ORF">si:dkey-6n6.5</name>
    <name type="ORF">zgc:63721</name>
</gene>
<protein>
    <recommendedName>
        <fullName>Differentially expressed in FDCP 6 homolog</fullName>
    </recommendedName>
</protein>
<evidence type="ECO:0000255" key="1">
    <source>
        <dbReference type="PROSITE-ProRule" id="PRU00145"/>
    </source>
</evidence>
<evidence type="ECO:0000256" key="2">
    <source>
        <dbReference type="SAM" id="MobiDB-lite"/>
    </source>
</evidence>
<evidence type="ECO:0000305" key="3"/>
<comment type="sequence caution" evidence="3">
    <conflict type="frameshift">
        <sequence resource="EMBL-CDS" id="AAQ91231"/>
    </conflict>
</comment>
<sequence>MDLRSELLKSIWYAFTALDVEKSGKVSKSQLKVLSHNLYTVLKIPHEAAALEEHFRDDDDGPVSSQGYMPYLNKYILDKVVEGTFVKENVDELCWTLTAKKNYRPEGKSILPAKDAFRLWCLFIFLSEDRYPLVMIPDEVEYLLKKFCMAMSVELNYVELEDFISQDSVQQNGFTVWTFLEMMNSGKLTRGIAKETVSMAIEEVYREIVGDVLKEGYLWKKGQLRRNWTERWFTLRPSTLLYFTSEDRKDHKGNIQLDGNCCVEVLPDRDGKRCMFCLKTLTKTYELSASDTKQRQEWTTAIQTAIRLYVEGKTSLHKDLKLKRRDQREQREKRREAKEQELQRLRALQEERERKMAELELLKEAQRQAQAMLEQDEQRRRQQHEQLHQALEIQLKEAEEARASMQAEMALKEAEAEKQRTRIRELEAMQQRLEDALQQEIKARQDEEAFRYAQARLLAEEEEKMKALMGLREEQEEYIQRAQREKQELRQEMESKSRALEEAQRQLEETRANRYRVDQDVVAAQRKLRQASTNVKHWNVQMNRLMHPIGPGEKRSSGGSFSSFRIPSQKDPALRQKQKSEEQDEESKENMESRGGCEADRRLSTNGQMEIP</sequence>